<keyword id="KW-0067">ATP-binding</keyword>
<keyword id="KW-0347">Helicase</keyword>
<keyword id="KW-0378">Hydrolase</keyword>
<keyword id="KW-0547">Nucleotide-binding</keyword>
<keyword id="KW-0539">Nucleus</keyword>
<keyword id="KW-1185">Reference proteome</keyword>
<keyword id="KW-0690">Ribosome biogenesis</keyword>
<keyword id="KW-0694">RNA-binding</keyword>
<accession>Q9VL25</accession>
<accession>Q8MYY2</accession>
<protein>
    <recommendedName>
        <fullName evidence="6">ATP-dependent RNA helicase DHX33</fullName>
        <ecNumber>3.6.4.13</ecNumber>
    </recommendedName>
    <alternativeName>
        <fullName evidence="1">DEAH box protein 33 homolog</fullName>
    </alternativeName>
    <alternativeName>
        <fullName evidence="5">Protein athos</fullName>
    </alternativeName>
</protein>
<feature type="chain" id="PRO_0000456957" description="ATP-dependent RNA helicase DHX33">
    <location>
        <begin position="1"/>
        <end position="694"/>
    </location>
</feature>
<feature type="domain" description="Helicase ATP-binding" evidence="2">
    <location>
        <begin position="78"/>
        <end position="246"/>
    </location>
</feature>
<feature type="domain" description="Helicase C-terminal" evidence="3">
    <location>
        <begin position="270"/>
        <end position="443"/>
    </location>
</feature>
<feature type="short sequence motif" description="DEAH box" evidence="2">
    <location>
        <begin position="188"/>
        <end position="191"/>
    </location>
</feature>
<feature type="binding site" evidence="2">
    <location>
        <begin position="91"/>
        <end position="98"/>
    </location>
    <ligand>
        <name>ATP</name>
        <dbReference type="ChEBI" id="CHEBI:30616"/>
    </ligand>
</feature>
<reference evidence="9" key="1">
    <citation type="journal article" date="2000" name="Science">
        <title>The genome sequence of Drosophila melanogaster.</title>
        <authorList>
            <person name="Adams M.D."/>
            <person name="Celniker S.E."/>
            <person name="Holt R.A."/>
            <person name="Evans C.A."/>
            <person name="Gocayne J.D."/>
            <person name="Amanatides P.G."/>
            <person name="Scherer S.E."/>
            <person name="Li P.W."/>
            <person name="Hoskins R.A."/>
            <person name="Galle R.F."/>
            <person name="George R.A."/>
            <person name="Lewis S.E."/>
            <person name="Richards S."/>
            <person name="Ashburner M."/>
            <person name="Henderson S.N."/>
            <person name="Sutton G.G."/>
            <person name="Wortman J.R."/>
            <person name="Yandell M.D."/>
            <person name="Zhang Q."/>
            <person name="Chen L.X."/>
            <person name="Brandon R.C."/>
            <person name="Rogers Y.-H.C."/>
            <person name="Blazej R.G."/>
            <person name="Champe M."/>
            <person name="Pfeiffer B.D."/>
            <person name="Wan K.H."/>
            <person name="Doyle C."/>
            <person name="Baxter E.G."/>
            <person name="Helt G."/>
            <person name="Nelson C.R."/>
            <person name="Miklos G.L.G."/>
            <person name="Abril J.F."/>
            <person name="Agbayani A."/>
            <person name="An H.-J."/>
            <person name="Andrews-Pfannkoch C."/>
            <person name="Baldwin D."/>
            <person name="Ballew R.M."/>
            <person name="Basu A."/>
            <person name="Baxendale J."/>
            <person name="Bayraktaroglu L."/>
            <person name="Beasley E.M."/>
            <person name="Beeson K.Y."/>
            <person name="Benos P.V."/>
            <person name="Berman B.P."/>
            <person name="Bhandari D."/>
            <person name="Bolshakov S."/>
            <person name="Borkova D."/>
            <person name="Botchan M.R."/>
            <person name="Bouck J."/>
            <person name="Brokstein P."/>
            <person name="Brottier P."/>
            <person name="Burtis K.C."/>
            <person name="Busam D.A."/>
            <person name="Butler H."/>
            <person name="Cadieu E."/>
            <person name="Center A."/>
            <person name="Chandra I."/>
            <person name="Cherry J.M."/>
            <person name="Cawley S."/>
            <person name="Dahlke C."/>
            <person name="Davenport L.B."/>
            <person name="Davies P."/>
            <person name="de Pablos B."/>
            <person name="Delcher A."/>
            <person name="Deng Z."/>
            <person name="Mays A.D."/>
            <person name="Dew I."/>
            <person name="Dietz S.M."/>
            <person name="Dodson K."/>
            <person name="Doup L.E."/>
            <person name="Downes M."/>
            <person name="Dugan-Rocha S."/>
            <person name="Dunkov B.C."/>
            <person name="Dunn P."/>
            <person name="Durbin K.J."/>
            <person name="Evangelista C.C."/>
            <person name="Ferraz C."/>
            <person name="Ferriera S."/>
            <person name="Fleischmann W."/>
            <person name="Fosler C."/>
            <person name="Gabrielian A.E."/>
            <person name="Garg N.S."/>
            <person name="Gelbart W.M."/>
            <person name="Glasser K."/>
            <person name="Glodek A."/>
            <person name="Gong F."/>
            <person name="Gorrell J.H."/>
            <person name="Gu Z."/>
            <person name="Guan P."/>
            <person name="Harris M."/>
            <person name="Harris N.L."/>
            <person name="Harvey D.A."/>
            <person name="Heiman T.J."/>
            <person name="Hernandez J.R."/>
            <person name="Houck J."/>
            <person name="Hostin D."/>
            <person name="Houston K.A."/>
            <person name="Howland T.J."/>
            <person name="Wei M.-H."/>
            <person name="Ibegwam C."/>
            <person name="Jalali M."/>
            <person name="Kalush F."/>
            <person name="Karpen G.H."/>
            <person name="Ke Z."/>
            <person name="Kennison J.A."/>
            <person name="Ketchum K.A."/>
            <person name="Kimmel B.E."/>
            <person name="Kodira C.D."/>
            <person name="Kraft C.L."/>
            <person name="Kravitz S."/>
            <person name="Kulp D."/>
            <person name="Lai Z."/>
            <person name="Lasko P."/>
            <person name="Lei Y."/>
            <person name="Levitsky A.A."/>
            <person name="Li J.H."/>
            <person name="Li Z."/>
            <person name="Liang Y."/>
            <person name="Lin X."/>
            <person name="Liu X."/>
            <person name="Mattei B."/>
            <person name="McIntosh T.C."/>
            <person name="McLeod M.P."/>
            <person name="McPherson D."/>
            <person name="Merkulov G."/>
            <person name="Milshina N.V."/>
            <person name="Mobarry C."/>
            <person name="Morris J."/>
            <person name="Moshrefi A."/>
            <person name="Mount S.M."/>
            <person name="Moy M."/>
            <person name="Murphy B."/>
            <person name="Murphy L."/>
            <person name="Muzny D.M."/>
            <person name="Nelson D.L."/>
            <person name="Nelson D.R."/>
            <person name="Nelson K.A."/>
            <person name="Nixon K."/>
            <person name="Nusskern D.R."/>
            <person name="Pacleb J.M."/>
            <person name="Palazzolo M."/>
            <person name="Pittman G.S."/>
            <person name="Pan S."/>
            <person name="Pollard J."/>
            <person name="Puri V."/>
            <person name="Reese M.G."/>
            <person name="Reinert K."/>
            <person name="Remington K."/>
            <person name="Saunders R.D.C."/>
            <person name="Scheeler F."/>
            <person name="Shen H."/>
            <person name="Shue B.C."/>
            <person name="Siden-Kiamos I."/>
            <person name="Simpson M."/>
            <person name="Skupski M.P."/>
            <person name="Smith T.J."/>
            <person name="Spier E."/>
            <person name="Spradling A.C."/>
            <person name="Stapleton M."/>
            <person name="Strong R."/>
            <person name="Sun E."/>
            <person name="Svirskas R."/>
            <person name="Tector C."/>
            <person name="Turner R."/>
            <person name="Venter E."/>
            <person name="Wang A.H."/>
            <person name="Wang X."/>
            <person name="Wang Z.-Y."/>
            <person name="Wassarman D.A."/>
            <person name="Weinstock G.M."/>
            <person name="Weissenbach J."/>
            <person name="Williams S.M."/>
            <person name="Woodage T."/>
            <person name="Worley K.C."/>
            <person name="Wu D."/>
            <person name="Yang S."/>
            <person name="Yao Q.A."/>
            <person name="Ye J."/>
            <person name="Yeh R.-F."/>
            <person name="Zaveri J.S."/>
            <person name="Zhan M."/>
            <person name="Zhang G."/>
            <person name="Zhao Q."/>
            <person name="Zheng L."/>
            <person name="Zheng X.H."/>
            <person name="Zhong F.N."/>
            <person name="Zhong W."/>
            <person name="Zhou X."/>
            <person name="Zhu S.C."/>
            <person name="Zhu X."/>
            <person name="Smith H.O."/>
            <person name="Gibbs R.A."/>
            <person name="Myers E.W."/>
            <person name="Rubin G.M."/>
            <person name="Venter J.C."/>
        </authorList>
    </citation>
    <scope>NUCLEOTIDE SEQUENCE [LARGE SCALE GENOMIC DNA]</scope>
    <source>
        <strain evidence="9">Berkeley</strain>
    </source>
</reference>
<reference evidence="9" key="2">
    <citation type="journal article" date="2002" name="Genome Biol.">
        <title>Annotation of the Drosophila melanogaster euchromatic genome: a systematic review.</title>
        <authorList>
            <person name="Misra S."/>
            <person name="Crosby M.A."/>
            <person name="Mungall C.J."/>
            <person name="Matthews B.B."/>
            <person name="Campbell K.S."/>
            <person name="Hradecky P."/>
            <person name="Huang Y."/>
            <person name="Kaminker J.S."/>
            <person name="Millburn G.H."/>
            <person name="Prochnik S.E."/>
            <person name="Smith C.D."/>
            <person name="Tupy J.L."/>
            <person name="Whitfield E.J."/>
            <person name="Bayraktaroglu L."/>
            <person name="Berman B.P."/>
            <person name="Bettencourt B.R."/>
            <person name="Celniker S.E."/>
            <person name="de Grey A.D.N.J."/>
            <person name="Drysdale R.A."/>
            <person name="Harris N.L."/>
            <person name="Richter J."/>
            <person name="Russo S."/>
            <person name="Schroeder A.J."/>
            <person name="Shu S.Q."/>
            <person name="Stapleton M."/>
            <person name="Yamada C."/>
            <person name="Ashburner M."/>
            <person name="Gelbart W.M."/>
            <person name="Rubin G.M."/>
            <person name="Lewis S.E."/>
        </authorList>
    </citation>
    <scope>GENOME REANNOTATION</scope>
    <source>
        <strain evidence="9">Berkeley</strain>
    </source>
</reference>
<reference evidence="7" key="3">
    <citation type="submission" date="2002-05" db="EMBL/GenBank/DDBJ databases">
        <authorList>
            <person name="Stapleton M."/>
            <person name="Brokstein P."/>
            <person name="Hong L."/>
            <person name="Agbayani A."/>
            <person name="Carlson J."/>
            <person name="Champe M."/>
            <person name="Chavez C."/>
            <person name="Dorsett V."/>
            <person name="Dresnek D."/>
            <person name="Farfan D."/>
            <person name="Frise E."/>
            <person name="George R."/>
            <person name="Gonzalez M."/>
            <person name="Guarin H."/>
            <person name="Kronmiller B."/>
            <person name="Li P."/>
            <person name="Liao G."/>
            <person name="Miranda A."/>
            <person name="Mungall C.J."/>
            <person name="Nunoo J."/>
            <person name="Pacleb J."/>
            <person name="Paragas V."/>
            <person name="Park S."/>
            <person name="Patel S."/>
            <person name="Phouanenavong S."/>
            <person name="Wan K."/>
            <person name="Yu C."/>
            <person name="Lewis S.E."/>
            <person name="Rubin G.M."/>
            <person name="Celniker S."/>
        </authorList>
    </citation>
    <scope>NUCLEOTIDE SEQUENCE [LARGE SCALE MRNA]</scope>
    <source>
        <strain evidence="7">Berkeley</strain>
    </source>
</reference>
<reference key="4">
    <citation type="journal article" date="2022" name="Dev. Cell">
        <title>A translation control module coordinates germline stem cell differentiation with ribosome biogenesis during Drosophila oogenesis.</title>
        <authorList>
            <person name="Martin E.T."/>
            <person name="Blatt P."/>
            <person name="Nguyen E."/>
            <person name="Lahr R."/>
            <person name="Selvam S."/>
            <person name="Yoon H.A.M."/>
            <person name="Pocchiari T."/>
            <person name="Emtenani S."/>
            <person name="Siekhaus D.E."/>
            <person name="Berman A."/>
            <person name="Fuchs G."/>
            <person name="Rangan P."/>
        </authorList>
    </citation>
    <scope>FUNCTION</scope>
    <scope>DISRUPTION PHENOTYPE</scope>
    <scope>RNA-BINDING</scope>
</reference>
<name>DHX33_DROME</name>
<evidence type="ECO:0000250" key="1">
    <source>
        <dbReference type="UniProtKB" id="Q9H6R0"/>
    </source>
</evidence>
<evidence type="ECO:0000255" key="2">
    <source>
        <dbReference type="PROSITE-ProRule" id="PRU00541"/>
    </source>
</evidence>
<evidence type="ECO:0000255" key="3">
    <source>
        <dbReference type="PROSITE-ProRule" id="PRU00542"/>
    </source>
</evidence>
<evidence type="ECO:0000269" key="4">
    <source>
    </source>
</evidence>
<evidence type="ECO:0000303" key="5">
    <source>
    </source>
</evidence>
<evidence type="ECO:0000305" key="6"/>
<evidence type="ECO:0000312" key="7">
    <source>
        <dbReference type="EMBL" id="AAM29496.1"/>
    </source>
</evidence>
<evidence type="ECO:0000312" key="8">
    <source>
        <dbReference type="FlyBase" id="FBgn0032194"/>
    </source>
</evidence>
<evidence type="ECO:0000312" key="9">
    <source>
        <dbReference type="Proteomes" id="UP000000803"/>
    </source>
</evidence>
<organism evidence="9">
    <name type="scientific">Drosophila melanogaster</name>
    <name type="common">Fruit fly</name>
    <dbReference type="NCBI Taxonomy" id="7227"/>
    <lineage>
        <taxon>Eukaryota</taxon>
        <taxon>Metazoa</taxon>
        <taxon>Ecdysozoa</taxon>
        <taxon>Arthropoda</taxon>
        <taxon>Hexapoda</taxon>
        <taxon>Insecta</taxon>
        <taxon>Pterygota</taxon>
        <taxon>Neoptera</taxon>
        <taxon>Endopterygota</taxon>
        <taxon>Diptera</taxon>
        <taxon>Brachycera</taxon>
        <taxon>Muscomorpha</taxon>
        <taxon>Ephydroidea</taxon>
        <taxon>Drosophilidae</taxon>
        <taxon>Drosophila</taxon>
        <taxon>Sophophora</taxon>
    </lineage>
</organism>
<sequence>MDSKYFATSRNDAVGPSPVKFSFKRKYDAMANSPILEKKPHVAQIKQTIAPILLTSKRTSIEQQQKSLPVFNCRHRILKELEANDTVLIMSETGSGKTTQIPQFLLLAGYAKNGMIGITQPRRVAAITVARRVAQELNGTIGDTVGYTVRFEDVTSRATKIRFLTDGVLLRESIKDRLLLKYSVIILDEAHERTVNADLLFGIVKDAQKERRKQKLANLKVVVTSATMDIDHFGNYFNCKGMYLEGRTYPVRVMHTKEEHEDYIHTVLVTLFHIHRTTPKNHDVLIFLTGQEEIESLAQQIRQLAKIDTTGTTDLRVFTLYAQLSQGKQLECFVPTPANVRKVILATNIAETSITIPGIRCVIDCGFVKEKSFNTVDGLDVLKSVRISKAQAWQRAGRAGRDADGTCYRAYTKAEMDSFADATQPEILRTNPTSMVLQLLALDIDCNNFDFLDPPLEDGLRSAYKSLDALGAIKTGDDSYITPLGRQMVQYPLDPKYSKLLLTASSFGCMEEILSLVSVLSSDHVFVSNSEKNEMAALAHAKFQSKHGDHLTLLNVFNGFLKSEKPKMWCHDNYLNLRSLTYARNVRRQLREISEHLHLALNSSDDIEMLKKCILNGFFENIAVLQRDGFYITASGNIRSKIHPSSVLHGKYKPSYILFTEIVQTEQTFLRQVTEISIEWIKEVVPFVKNIPTR</sequence>
<dbReference type="EC" id="3.6.4.13"/>
<dbReference type="EMBL" id="AE014134">
    <property type="protein sequence ID" value="AAF52873.2"/>
    <property type="molecule type" value="Genomic_DNA"/>
</dbReference>
<dbReference type="EMBL" id="AY113491">
    <property type="protein sequence ID" value="AAM29496.1"/>
    <property type="molecule type" value="mRNA"/>
</dbReference>
<dbReference type="EMBL" id="AE014134">
    <property type="protein sequence ID" value="API64983.1"/>
    <property type="molecule type" value="Genomic_DNA"/>
</dbReference>
<dbReference type="EMBL" id="AE014134">
    <property type="protein sequence ID" value="API64984.1"/>
    <property type="molecule type" value="Genomic_DNA"/>
</dbReference>
<dbReference type="RefSeq" id="NP_001334733.1">
    <property type="nucleotide sequence ID" value="NM_001347805.1"/>
</dbReference>
<dbReference type="RefSeq" id="NP_001334734.1">
    <property type="nucleotide sequence ID" value="NM_001347806.1"/>
</dbReference>
<dbReference type="RefSeq" id="NP_609356.2">
    <property type="nucleotide sequence ID" value="NM_135512.4"/>
</dbReference>
<dbReference type="SMR" id="Q9VL25"/>
<dbReference type="FunCoup" id="Q9VL25">
    <property type="interactions" value="489"/>
</dbReference>
<dbReference type="STRING" id="7227.FBpp0401582"/>
<dbReference type="GlyGen" id="Q9VL25">
    <property type="glycosylation" value="1 site"/>
</dbReference>
<dbReference type="PaxDb" id="7227-FBpp0079537"/>
<dbReference type="DNASU" id="34357"/>
<dbReference type="EnsemblMetazoa" id="FBtr0079947">
    <property type="protein sequence ID" value="FBpp0079537"/>
    <property type="gene ID" value="FBgn0032194"/>
</dbReference>
<dbReference type="EnsemblMetazoa" id="FBtr0445414">
    <property type="protein sequence ID" value="FBpp0401582"/>
    <property type="gene ID" value="FBgn0032194"/>
</dbReference>
<dbReference type="EnsemblMetazoa" id="FBtr0445415">
    <property type="protein sequence ID" value="FBpp0401583"/>
    <property type="gene ID" value="FBgn0032194"/>
</dbReference>
<dbReference type="GeneID" id="34357"/>
<dbReference type="KEGG" id="dme:Dmel_CG4901"/>
<dbReference type="UCSC" id="CG4901-RA">
    <property type="organism name" value="d. melanogaster"/>
</dbReference>
<dbReference type="AGR" id="FB:FBgn0032194"/>
<dbReference type="CTD" id="34357"/>
<dbReference type="FlyBase" id="FBgn0032194">
    <property type="gene designation" value="ath"/>
</dbReference>
<dbReference type="VEuPathDB" id="VectorBase:FBgn0032194"/>
<dbReference type="eggNOG" id="KOG0924">
    <property type="taxonomic scope" value="Eukaryota"/>
</dbReference>
<dbReference type="GeneTree" id="ENSGT00940000156747"/>
<dbReference type="HOGENOM" id="CLU_001832_5_11_1"/>
<dbReference type="InParanoid" id="Q9VL25"/>
<dbReference type="OMA" id="CHENFLH"/>
<dbReference type="OrthoDB" id="10253254at2759"/>
<dbReference type="BioGRID-ORCS" id="34357">
    <property type="hits" value="0 hits in 1 CRISPR screen"/>
</dbReference>
<dbReference type="GenomeRNAi" id="34357"/>
<dbReference type="PRO" id="PR:Q9VL25"/>
<dbReference type="Proteomes" id="UP000000803">
    <property type="component" value="Chromosome 2L"/>
</dbReference>
<dbReference type="Bgee" id="FBgn0032194">
    <property type="expression patterns" value="Expressed in embryonic/larval hemocyte (Drosophila) and 59 other cell types or tissues"/>
</dbReference>
<dbReference type="GO" id="GO:0005730">
    <property type="term" value="C:nucleolus"/>
    <property type="evidence" value="ECO:0000314"/>
    <property type="project" value="FlyBase"/>
</dbReference>
<dbReference type="GO" id="GO:0005524">
    <property type="term" value="F:ATP binding"/>
    <property type="evidence" value="ECO:0007669"/>
    <property type="project" value="UniProtKB-KW"/>
</dbReference>
<dbReference type="GO" id="GO:0003725">
    <property type="term" value="F:double-stranded RNA binding"/>
    <property type="evidence" value="ECO:0000318"/>
    <property type="project" value="GO_Central"/>
</dbReference>
<dbReference type="GO" id="GO:0004386">
    <property type="term" value="F:helicase activity"/>
    <property type="evidence" value="ECO:0000318"/>
    <property type="project" value="GO_Central"/>
</dbReference>
<dbReference type="GO" id="GO:0016787">
    <property type="term" value="F:hydrolase activity"/>
    <property type="evidence" value="ECO:0007669"/>
    <property type="project" value="UniProtKB-KW"/>
</dbReference>
<dbReference type="GO" id="GO:0003724">
    <property type="term" value="F:RNA helicase activity"/>
    <property type="evidence" value="ECO:0000250"/>
    <property type="project" value="FlyBase"/>
</dbReference>
<dbReference type="GO" id="GO:0019843">
    <property type="term" value="F:rRNA binding"/>
    <property type="evidence" value="ECO:0000314"/>
    <property type="project" value="FlyBase"/>
</dbReference>
<dbReference type="GO" id="GO:0045943">
    <property type="term" value="P:positive regulation of transcription by RNA polymerase I"/>
    <property type="evidence" value="ECO:0000318"/>
    <property type="project" value="GO_Central"/>
</dbReference>
<dbReference type="GO" id="GO:0042254">
    <property type="term" value="P:ribosome biogenesis"/>
    <property type="evidence" value="ECO:0000315"/>
    <property type="project" value="FlyBase"/>
</dbReference>
<dbReference type="CDD" id="cd17978">
    <property type="entry name" value="DEXHc_DHX33"/>
    <property type="match status" value="1"/>
</dbReference>
<dbReference type="CDD" id="cd18791">
    <property type="entry name" value="SF2_C_RHA"/>
    <property type="match status" value="1"/>
</dbReference>
<dbReference type="FunFam" id="1.20.120.1080:FF:000037">
    <property type="entry name" value="ATP-dependent RNA helicase DHX33"/>
    <property type="match status" value="1"/>
</dbReference>
<dbReference type="FunFam" id="3.40.50.300:FF:000145">
    <property type="entry name" value="probable ATP-dependent RNA helicase DHX40"/>
    <property type="match status" value="1"/>
</dbReference>
<dbReference type="FunFam" id="3.40.50.300:FF:000750">
    <property type="entry name" value="Putative ATP-dependent RNA helicase DHX33"/>
    <property type="match status" value="1"/>
</dbReference>
<dbReference type="Gene3D" id="1.20.120.1080">
    <property type="match status" value="1"/>
</dbReference>
<dbReference type="Gene3D" id="3.40.50.300">
    <property type="entry name" value="P-loop containing nucleotide triphosphate hydrolases"/>
    <property type="match status" value="2"/>
</dbReference>
<dbReference type="InterPro" id="IPR011709">
    <property type="entry name" value="DEAD-box_helicase_OB_fold"/>
</dbReference>
<dbReference type="InterPro" id="IPR011545">
    <property type="entry name" value="DEAD/DEAH_box_helicase_dom"/>
</dbReference>
<dbReference type="InterPro" id="IPR002464">
    <property type="entry name" value="DNA/RNA_helicase_DEAH_CS"/>
</dbReference>
<dbReference type="InterPro" id="IPR048333">
    <property type="entry name" value="HA2_WH"/>
</dbReference>
<dbReference type="InterPro" id="IPR007502">
    <property type="entry name" value="Helicase-assoc_dom"/>
</dbReference>
<dbReference type="InterPro" id="IPR014001">
    <property type="entry name" value="Helicase_ATP-bd"/>
</dbReference>
<dbReference type="InterPro" id="IPR001650">
    <property type="entry name" value="Helicase_C-like"/>
</dbReference>
<dbReference type="InterPro" id="IPR027417">
    <property type="entry name" value="P-loop_NTPase"/>
</dbReference>
<dbReference type="PANTHER" id="PTHR18934">
    <property type="entry name" value="ATP-DEPENDENT RNA HELICASE"/>
    <property type="match status" value="1"/>
</dbReference>
<dbReference type="PANTHER" id="PTHR18934:SF118">
    <property type="entry name" value="ATP-DEPENDENT RNA HELICASE DHX33"/>
    <property type="match status" value="1"/>
</dbReference>
<dbReference type="Pfam" id="PF00270">
    <property type="entry name" value="DEAD"/>
    <property type="match status" value="1"/>
</dbReference>
<dbReference type="Pfam" id="PF21010">
    <property type="entry name" value="HA2_C"/>
    <property type="match status" value="1"/>
</dbReference>
<dbReference type="Pfam" id="PF04408">
    <property type="entry name" value="HA2_N"/>
    <property type="match status" value="1"/>
</dbReference>
<dbReference type="Pfam" id="PF00271">
    <property type="entry name" value="Helicase_C"/>
    <property type="match status" value="1"/>
</dbReference>
<dbReference type="Pfam" id="PF07717">
    <property type="entry name" value="OB_NTP_bind"/>
    <property type="match status" value="1"/>
</dbReference>
<dbReference type="SMART" id="SM00487">
    <property type="entry name" value="DEXDc"/>
    <property type="match status" value="1"/>
</dbReference>
<dbReference type="SMART" id="SM00847">
    <property type="entry name" value="HA2"/>
    <property type="match status" value="1"/>
</dbReference>
<dbReference type="SMART" id="SM00490">
    <property type="entry name" value="HELICc"/>
    <property type="match status" value="1"/>
</dbReference>
<dbReference type="SUPFAM" id="SSF52540">
    <property type="entry name" value="P-loop containing nucleoside triphosphate hydrolases"/>
    <property type="match status" value="1"/>
</dbReference>
<dbReference type="PROSITE" id="PS00690">
    <property type="entry name" value="DEAH_ATP_HELICASE"/>
    <property type="match status" value="1"/>
</dbReference>
<dbReference type="PROSITE" id="PS51192">
    <property type="entry name" value="HELICASE_ATP_BIND_1"/>
    <property type="match status" value="1"/>
</dbReference>
<dbReference type="PROSITE" id="PS51194">
    <property type="entry name" value="HELICASE_CTER"/>
    <property type="match status" value="1"/>
</dbReference>
<proteinExistence type="evidence at protein level"/>
<comment type="function">
    <text evidence="4">Part of a translational control module, also containing pths/DDX47 and ais/DDX52, which coordinates germline stem cell differentiation with ribosome biogenesis during oogenesis. This module allows for coregulation of ribosomal proteins and non1/GTPBP4, a p53 repressor, preventing p53 stabilization, cell cycle arrest and loss of stem cell differentiation.</text>
</comment>
<comment type="catalytic activity">
    <reaction>
        <text>ATP + H2O = ADP + phosphate + H(+)</text>
        <dbReference type="Rhea" id="RHEA:13065"/>
        <dbReference type="ChEBI" id="CHEBI:15377"/>
        <dbReference type="ChEBI" id="CHEBI:15378"/>
        <dbReference type="ChEBI" id="CHEBI:30616"/>
        <dbReference type="ChEBI" id="CHEBI:43474"/>
        <dbReference type="ChEBI" id="CHEBI:456216"/>
        <dbReference type="EC" id="3.6.4.13"/>
    </reaction>
</comment>
<comment type="subcellular location">
    <subcellularLocation>
        <location evidence="4">Nucleus</location>
        <location evidence="4">Nucleolus</location>
    </subcellularLocation>
</comment>
<comment type="disruption phenotype">
    <text evidence="4">Conditional RNAi-mediated knock-down in germline cells results in hypotrophy of the nucleolus.</text>
</comment>
<comment type="similarity">
    <text evidence="6">Belongs to the DEAD box helicase family. DEAH subfamily.</text>
</comment>
<gene>
    <name evidence="8" type="primary">ath</name>
    <name evidence="8" type="ORF">CG4901</name>
</gene>